<name>LPXC_CUPTR</name>
<organism>
    <name type="scientific">Cupriavidus taiwanensis (strain DSM 17343 / BCRC 17206 / CCUG 44338 / CIP 107171 / LMG 19424 / R1)</name>
    <name type="common">Ralstonia taiwanensis (strain LMG 19424)</name>
    <dbReference type="NCBI Taxonomy" id="977880"/>
    <lineage>
        <taxon>Bacteria</taxon>
        <taxon>Pseudomonadati</taxon>
        <taxon>Pseudomonadota</taxon>
        <taxon>Betaproteobacteria</taxon>
        <taxon>Burkholderiales</taxon>
        <taxon>Burkholderiaceae</taxon>
        <taxon>Cupriavidus</taxon>
    </lineage>
</organism>
<proteinExistence type="inferred from homology"/>
<feature type="chain" id="PRO_1000122776" description="UDP-3-O-acyl-N-acetylglucosamine deacetylase">
    <location>
        <begin position="1"/>
        <end position="305"/>
    </location>
</feature>
<feature type="active site" description="Proton donor" evidence="1">
    <location>
        <position position="264"/>
    </location>
</feature>
<feature type="binding site" evidence="1">
    <location>
        <position position="78"/>
    </location>
    <ligand>
        <name>Zn(2+)</name>
        <dbReference type="ChEBI" id="CHEBI:29105"/>
    </ligand>
</feature>
<feature type="binding site" evidence="1">
    <location>
        <position position="237"/>
    </location>
    <ligand>
        <name>Zn(2+)</name>
        <dbReference type="ChEBI" id="CHEBI:29105"/>
    </ligand>
</feature>
<feature type="binding site" evidence="1">
    <location>
        <position position="241"/>
    </location>
    <ligand>
        <name>Zn(2+)</name>
        <dbReference type="ChEBI" id="CHEBI:29105"/>
    </ligand>
</feature>
<keyword id="KW-0378">Hydrolase</keyword>
<keyword id="KW-0441">Lipid A biosynthesis</keyword>
<keyword id="KW-0444">Lipid biosynthesis</keyword>
<keyword id="KW-0443">Lipid metabolism</keyword>
<keyword id="KW-0479">Metal-binding</keyword>
<keyword id="KW-0862">Zinc</keyword>
<accession>B3R6V2</accession>
<gene>
    <name evidence="1" type="primary">lpxC</name>
    <name type="ordered locus">RALTA_A2722</name>
</gene>
<protein>
    <recommendedName>
        <fullName evidence="1">UDP-3-O-acyl-N-acetylglucosamine deacetylase</fullName>
        <shortName evidence="1">UDP-3-O-acyl-GlcNAc deacetylase</shortName>
        <ecNumber evidence="1">3.5.1.108</ecNumber>
    </recommendedName>
    <alternativeName>
        <fullName evidence="1">UDP-3-O-[R-3-hydroxymyristoyl]-N-acetylglucosamine deacetylase</fullName>
    </alternativeName>
</protein>
<evidence type="ECO:0000255" key="1">
    <source>
        <dbReference type="HAMAP-Rule" id="MF_00388"/>
    </source>
</evidence>
<dbReference type="EC" id="3.5.1.108" evidence="1"/>
<dbReference type="EMBL" id="CU633749">
    <property type="protein sequence ID" value="CAQ70652.1"/>
    <property type="molecule type" value="Genomic_DNA"/>
</dbReference>
<dbReference type="RefSeq" id="WP_012353947.1">
    <property type="nucleotide sequence ID" value="NC_010528.1"/>
</dbReference>
<dbReference type="SMR" id="B3R6V2"/>
<dbReference type="GeneID" id="29761411"/>
<dbReference type="KEGG" id="cti:RALTA_A2722"/>
<dbReference type="eggNOG" id="COG0774">
    <property type="taxonomic scope" value="Bacteria"/>
</dbReference>
<dbReference type="HOGENOM" id="CLU_046528_1_0_4"/>
<dbReference type="BioCyc" id="CTAI977880:RALTA_RS13245-MONOMER"/>
<dbReference type="UniPathway" id="UPA00359">
    <property type="reaction ID" value="UER00478"/>
</dbReference>
<dbReference type="Proteomes" id="UP000001692">
    <property type="component" value="Chromosome 1"/>
</dbReference>
<dbReference type="GO" id="GO:0016020">
    <property type="term" value="C:membrane"/>
    <property type="evidence" value="ECO:0007669"/>
    <property type="project" value="GOC"/>
</dbReference>
<dbReference type="GO" id="GO:0046872">
    <property type="term" value="F:metal ion binding"/>
    <property type="evidence" value="ECO:0007669"/>
    <property type="project" value="UniProtKB-KW"/>
</dbReference>
<dbReference type="GO" id="GO:0103117">
    <property type="term" value="F:UDP-3-O-acyl-N-acetylglucosamine deacetylase activity"/>
    <property type="evidence" value="ECO:0007669"/>
    <property type="project" value="UniProtKB-UniRule"/>
</dbReference>
<dbReference type="GO" id="GO:0009245">
    <property type="term" value="P:lipid A biosynthetic process"/>
    <property type="evidence" value="ECO:0007669"/>
    <property type="project" value="UniProtKB-UniRule"/>
</dbReference>
<dbReference type="Gene3D" id="3.30.230.20">
    <property type="entry name" value="lpxc deacetylase, domain 1"/>
    <property type="match status" value="1"/>
</dbReference>
<dbReference type="Gene3D" id="3.30.1700.10">
    <property type="entry name" value="lpxc deacetylase, domain 2"/>
    <property type="match status" value="1"/>
</dbReference>
<dbReference type="HAMAP" id="MF_00388">
    <property type="entry name" value="LpxC"/>
    <property type="match status" value="1"/>
</dbReference>
<dbReference type="InterPro" id="IPR020568">
    <property type="entry name" value="Ribosomal_Su5_D2-typ_SF"/>
</dbReference>
<dbReference type="InterPro" id="IPR004463">
    <property type="entry name" value="UDP-acyl_GlcNac_deAcase"/>
</dbReference>
<dbReference type="InterPro" id="IPR011334">
    <property type="entry name" value="UDP-acyl_GlcNac_deAcase_C"/>
</dbReference>
<dbReference type="InterPro" id="IPR015870">
    <property type="entry name" value="UDP-acyl_N-AcGlcN_deAcase_N"/>
</dbReference>
<dbReference type="NCBIfam" id="TIGR00325">
    <property type="entry name" value="lpxC"/>
    <property type="match status" value="1"/>
</dbReference>
<dbReference type="PANTHER" id="PTHR33694">
    <property type="entry name" value="UDP-3-O-ACYL-N-ACETYLGLUCOSAMINE DEACETYLASE 1, MITOCHONDRIAL-RELATED"/>
    <property type="match status" value="1"/>
</dbReference>
<dbReference type="PANTHER" id="PTHR33694:SF1">
    <property type="entry name" value="UDP-3-O-ACYL-N-ACETYLGLUCOSAMINE DEACETYLASE 1, MITOCHONDRIAL-RELATED"/>
    <property type="match status" value="1"/>
</dbReference>
<dbReference type="Pfam" id="PF03331">
    <property type="entry name" value="LpxC"/>
    <property type="match status" value="1"/>
</dbReference>
<dbReference type="SUPFAM" id="SSF54211">
    <property type="entry name" value="Ribosomal protein S5 domain 2-like"/>
    <property type="match status" value="2"/>
</dbReference>
<reference key="1">
    <citation type="journal article" date="2008" name="Genome Res.">
        <title>Genome sequence of the beta-rhizobium Cupriavidus taiwanensis and comparative genomics of rhizobia.</title>
        <authorList>
            <person name="Amadou C."/>
            <person name="Pascal G."/>
            <person name="Mangenot S."/>
            <person name="Glew M."/>
            <person name="Bontemps C."/>
            <person name="Capela D."/>
            <person name="Carrere S."/>
            <person name="Cruveiller S."/>
            <person name="Dossat C."/>
            <person name="Lajus A."/>
            <person name="Marchetti M."/>
            <person name="Poinsot V."/>
            <person name="Rouy Z."/>
            <person name="Servin B."/>
            <person name="Saad M."/>
            <person name="Schenowitz C."/>
            <person name="Barbe V."/>
            <person name="Batut J."/>
            <person name="Medigue C."/>
            <person name="Masson-Boivin C."/>
        </authorList>
    </citation>
    <scope>NUCLEOTIDE SEQUENCE [LARGE SCALE GENOMIC DNA]</scope>
    <source>
        <strain>DSM 17343 / BCRC 17206 / CCUG 44338 / CIP 107171 / LMG 19424 / R1</strain>
    </source>
</reference>
<sequence>MLKQRTIKSLVKTVGIGLHSGRKVTLTLRPAPAGTGIVFTRVDLPEAVEIPVAASAIGDTRLASVLQKDGARVSTVEHLMSACAGLGIDNLYVDVDAEEIPIMDGSAASFVFLLQSAGIEEQNAPKTFIRVKKPVEVREGDKLARLEPFFGFKLSFTIDFRHPAVDKTGQTFSIDFADTSYVREIARARTFGFAHEVEALREMGLARGGSLDNAIVLDEHRMLNNEELRYGDEFVRHKILDAIGDLYVVGHPLIGAYVANKSGHGLNNQLLRALLADQEAYELVTFDRVEEAPAAFLPQAQPAFA</sequence>
<comment type="function">
    <text evidence="1">Catalyzes the hydrolysis of UDP-3-O-myristoyl-N-acetylglucosamine to form UDP-3-O-myristoylglucosamine and acetate, the committed step in lipid A biosynthesis.</text>
</comment>
<comment type="catalytic activity">
    <reaction evidence="1">
        <text>a UDP-3-O-[(3R)-3-hydroxyacyl]-N-acetyl-alpha-D-glucosamine + H2O = a UDP-3-O-[(3R)-3-hydroxyacyl]-alpha-D-glucosamine + acetate</text>
        <dbReference type="Rhea" id="RHEA:67816"/>
        <dbReference type="ChEBI" id="CHEBI:15377"/>
        <dbReference type="ChEBI" id="CHEBI:30089"/>
        <dbReference type="ChEBI" id="CHEBI:137740"/>
        <dbReference type="ChEBI" id="CHEBI:173225"/>
        <dbReference type="EC" id="3.5.1.108"/>
    </reaction>
</comment>
<comment type="cofactor">
    <cofactor evidence="1">
        <name>Zn(2+)</name>
        <dbReference type="ChEBI" id="CHEBI:29105"/>
    </cofactor>
</comment>
<comment type="pathway">
    <text evidence="1">Glycolipid biosynthesis; lipid IV(A) biosynthesis; lipid IV(A) from (3R)-3-hydroxytetradecanoyl-[acyl-carrier-protein] and UDP-N-acetyl-alpha-D-glucosamine: step 2/6.</text>
</comment>
<comment type="similarity">
    <text evidence="1">Belongs to the LpxC family.</text>
</comment>